<comment type="function">
    <text evidence="1">Modifies, by uridylylation and deuridylylation, the PII regulatory proteins (GlnB and homologs), in response to the nitrogen status of the cell that GlnD senses through the glutamine level. Under low glutamine levels, catalyzes the conversion of the PII proteins and UTP to PII-UMP and PPi, while under higher glutamine levels, GlnD hydrolyzes PII-UMP to PII and UMP (deuridylylation). Thus, controls uridylylation state and activity of the PII proteins, and plays an important role in the regulation of nitrogen assimilation and metabolism.</text>
</comment>
<comment type="catalytic activity">
    <reaction evidence="1">
        <text>[protein-PII]-L-tyrosine + UTP = [protein-PII]-uridylyl-L-tyrosine + diphosphate</text>
        <dbReference type="Rhea" id="RHEA:13673"/>
        <dbReference type="Rhea" id="RHEA-COMP:12147"/>
        <dbReference type="Rhea" id="RHEA-COMP:12148"/>
        <dbReference type="ChEBI" id="CHEBI:33019"/>
        <dbReference type="ChEBI" id="CHEBI:46398"/>
        <dbReference type="ChEBI" id="CHEBI:46858"/>
        <dbReference type="ChEBI" id="CHEBI:90602"/>
        <dbReference type="EC" id="2.7.7.59"/>
    </reaction>
</comment>
<comment type="catalytic activity">
    <reaction evidence="1">
        <text>[protein-PII]-uridylyl-L-tyrosine + H2O = [protein-PII]-L-tyrosine + UMP + H(+)</text>
        <dbReference type="Rhea" id="RHEA:48600"/>
        <dbReference type="Rhea" id="RHEA-COMP:12147"/>
        <dbReference type="Rhea" id="RHEA-COMP:12148"/>
        <dbReference type="ChEBI" id="CHEBI:15377"/>
        <dbReference type="ChEBI" id="CHEBI:15378"/>
        <dbReference type="ChEBI" id="CHEBI:46858"/>
        <dbReference type="ChEBI" id="CHEBI:57865"/>
        <dbReference type="ChEBI" id="CHEBI:90602"/>
    </reaction>
</comment>
<comment type="cofactor">
    <cofactor evidence="1">
        <name>Mg(2+)</name>
        <dbReference type="ChEBI" id="CHEBI:18420"/>
    </cofactor>
</comment>
<comment type="activity regulation">
    <text evidence="1">Uridylyltransferase (UTase) activity is inhibited by glutamine, while glutamine activates uridylyl-removing (UR) activity.</text>
</comment>
<comment type="domain">
    <text evidence="1">Has four distinct domains: an N-terminal nucleotidyltransferase (NT) domain responsible for UTase activity, a central HD domain that encodes UR activity, and two C-terminal ACT domains that seem to have a role in glutamine sensing.</text>
</comment>
<comment type="similarity">
    <text evidence="1">Belongs to the GlnD family.</text>
</comment>
<accession>C0RGK0</accession>
<name>GLND_BRUMB</name>
<keyword id="KW-0378">Hydrolase</keyword>
<keyword id="KW-0460">Magnesium</keyword>
<keyword id="KW-0511">Multifunctional enzyme</keyword>
<keyword id="KW-0548">Nucleotidyltransferase</keyword>
<keyword id="KW-0677">Repeat</keyword>
<keyword id="KW-0808">Transferase</keyword>
<gene>
    <name evidence="1" type="primary">glnD</name>
    <name type="ordered locus">BMEA_A0150</name>
</gene>
<reference key="1">
    <citation type="submission" date="2009-03" db="EMBL/GenBank/DDBJ databases">
        <title>Brucella melitensis ATCC 23457 whole genome shotgun sequencing project.</title>
        <authorList>
            <person name="Setubal J.C."/>
            <person name="Boyle S."/>
            <person name="Crasta O.R."/>
            <person name="Gillespie J.J."/>
            <person name="Kenyon R.W."/>
            <person name="Lu J."/>
            <person name="Mane S."/>
            <person name="Nagrani S."/>
            <person name="Shallom J.M."/>
            <person name="Shallom S."/>
            <person name="Shukla M."/>
            <person name="Snyder E.E."/>
            <person name="Sobral B.W."/>
            <person name="Wattam A.R."/>
            <person name="Will R."/>
            <person name="Williams K."/>
            <person name="Yoo H."/>
            <person name="Munk C."/>
            <person name="Tapia R."/>
            <person name="Han C."/>
            <person name="Detter J.C."/>
            <person name="Bruce D."/>
            <person name="Brettin T.S."/>
        </authorList>
    </citation>
    <scope>NUCLEOTIDE SEQUENCE [LARGE SCALE GENOMIC DNA]</scope>
    <source>
        <strain>ATCC 23457</strain>
    </source>
</reference>
<feature type="chain" id="PRO_1000132526" description="Bifunctional uridylyltransferase/uridylyl-removing enzyme">
    <location>
        <begin position="1"/>
        <end position="934"/>
    </location>
</feature>
<feature type="domain" description="HD" evidence="2">
    <location>
        <begin position="496"/>
        <end position="613"/>
    </location>
</feature>
<feature type="domain" description="ACT 1" evidence="1">
    <location>
        <begin position="737"/>
        <end position="818"/>
    </location>
</feature>
<feature type="domain" description="ACT 2" evidence="1">
    <location>
        <begin position="848"/>
        <end position="931"/>
    </location>
</feature>
<feature type="region of interest" description="Uridylyltransferase">
    <location>
        <begin position="1"/>
        <end position="379"/>
    </location>
</feature>
<feature type="region of interest" description="Uridylyl-removing">
    <location>
        <begin position="380"/>
        <end position="736"/>
    </location>
</feature>
<evidence type="ECO:0000255" key="1">
    <source>
        <dbReference type="HAMAP-Rule" id="MF_00277"/>
    </source>
</evidence>
<evidence type="ECO:0000255" key="2">
    <source>
        <dbReference type="PROSITE-ProRule" id="PRU01175"/>
    </source>
</evidence>
<organism>
    <name type="scientific">Brucella melitensis biotype 2 (strain ATCC 23457)</name>
    <dbReference type="NCBI Taxonomy" id="546272"/>
    <lineage>
        <taxon>Bacteria</taxon>
        <taxon>Pseudomonadati</taxon>
        <taxon>Pseudomonadota</taxon>
        <taxon>Alphaproteobacteria</taxon>
        <taxon>Hyphomicrobiales</taxon>
        <taxon>Brucellaceae</taxon>
        <taxon>Brucella/Ochrobactrum group</taxon>
        <taxon>Brucella</taxon>
    </lineage>
</organism>
<protein>
    <recommendedName>
        <fullName evidence="1">Bifunctional uridylyltransferase/uridylyl-removing enzyme</fullName>
        <shortName evidence="1">UTase/UR</shortName>
    </recommendedName>
    <alternativeName>
        <fullName evidence="1">Bifunctional [protein-PII] modification enzyme</fullName>
    </alternativeName>
    <alternativeName>
        <fullName evidence="1">Bifunctional nitrogen sensor protein</fullName>
    </alternativeName>
    <domain>
        <recommendedName>
            <fullName evidence="1">[Protein-PII] uridylyltransferase</fullName>
            <shortName evidence="1">PII uridylyltransferase</shortName>
            <shortName evidence="1">UTase</shortName>
            <ecNumber evidence="1">2.7.7.59</ecNumber>
        </recommendedName>
    </domain>
    <domain>
        <recommendedName>
            <fullName evidence="1">[Protein-PII]-UMP uridylyl-removing enzyme</fullName>
            <shortName evidence="1">UR</shortName>
            <ecNumber evidence="1">3.1.4.-</ecNumber>
        </recommendedName>
    </domain>
</protein>
<sequence>MSAHDLKLEEIVNAETLRRKLNELADTADESYTSLPMRKVVLQTLKDALASGRANAEDMLMKDGGGTLCAKRLCYLMDTLIDILFEFATTRAYPTRNPSKAENMALVAVGGYGRGGLAQGSDIDLLFLLPYKQTPWGEQVVEHTLYMLWDMGLKVGHSTRNIDECIRLAREDMTIRTALLDARFLTGDKDLFRTLEIRFEEEIVKGTEPEFIQAKLAERDARHRKAGETRYLVEPNVKEGKGGQRDLHTLFWITKYFYRVKTKEELVKLGVLSRAELKLFNKAEDFLWAVRCHMHFATLKAEERLSFDIQPEIAQRLGYTAHPGQNYVERFMKHYFLVAKDVGDLTRIICAALEEQQAKHVPGFNRIFLTFSRRKRKLSDDGAFISENHRINIARPDIFRQDPVNMIRLFHLADRHGLEFHPEAMQSLTRSLKLINADLRENPEANRLFLEILTSPRNPELILRRMNESGVLGKFIPDFGKIVAMMQFNMYHHYTVDEHLLRCIAVLSEIEHGELKTEHPLSNHLITTIKRDRNLLYVTLLLHDIAKGRPEDHSIAGARIARRLCPRFGLTPSETETVEWLVREHLTMSMVAQSRDLNDRKTIIDFADTVQTMERLKLLLILTVCDIKAVGPGIWNGWKGQLLRTLFYETELVLTGGFSELSRAARDKQAREALAERLSDWPKEERDAYLALPYTNYFLTVSLDDQVRHAHFIRDADQQGRALVTMAKPHAFEAVTEITVLAPDHPRLLSVITGACAAAGGNIVDAQIFTTSDGRALDTILISREFDTDDDERRRAERVGKVIEDVLSGKAHLPDMLAKRTKPKKAARAFKVEPRVEINNTLSNKFTVIEVEGLDRPGLLSELTGLISDLSLDIASAHITTFGEKVIDSFYVTDLVGHKISNATRQGNIKRKLLALLGAENGARTNGRSPQAAA</sequence>
<proteinExistence type="inferred from homology"/>
<dbReference type="EC" id="2.7.7.59" evidence="1"/>
<dbReference type="EC" id="3.1.4.-" evidence="1"/>
<dbReference type="EMBL" id="CP001488">
    <property type="protein sequence ID" value="ACN99957.1"/>
    <property type="molecule type" value="Genomic_DNA"/>
</dbReference>
<dbReference type="RefSeq" id="WP_004686653.1">
    <property type="nucleotide sequence ID" value="NC_012441.1"/>
</dbReference>
<dbReference type="SMR" id="C0RGK0"/>
<dbReference type="KEGG" id="bmi:BMEA_A0150"/>
<dbReference type="HOGENOM" id="CLU_012833_1_0_5"/>
<dbReference type="PRO" id="PR:C0RGK0"/>
<dbReference type="Proteomes" id="UP000001748">
    <property type="component" value="Chromosome I"/>
</dbReference>
<dbReference type="GO" id="GO:0008773">
    <property type="term" value="F:[protein-PII] uridylyltransferase activity"/>
    <property type="evidence" value="ECO:0007669"/>
    <property type="project" value="UniProtKB-UniRule"/>
</dbReference>
<dbReference type="GO" id="GO:0008081">
    <property type="term" value="F:phosphoric diester hydrolase activity"/>
    <property type="evidence" value="ECO:0007669"/>
    <property type="project" value="UniProtKB-UniRule"/>
</dbReference>
<dbReference type="GO" id="GO:0006808">
    <property type="term" value="P:regulation of nitrogen utilization"/>
    <property type="evidence" value="ECO:0007669"/>
    <property type="project" value="UniProtKB-UniRule"/>
</dbReference>
<dbReference type="CDD" id="cd04899">
    <property type="entry name" value="ACT_ACR-UUR-like_2"/>
    <property type="match status" value="1"/>
</dbReference>
<dbReference type="CDD" id="cd04900">
    <property type="entry name" value="ACT_UUR-like_1"/>
    <property type="match status" value="1"/>
</dbReference>
<dbReference type="CDD" id="cd00077">
    <property type="entry name" value="HDc"/>
    <property type="match status" value="1"/>
</dbReference>
<dbReference type="CDD" id="cd05401">
    <property type="entry name" value="NT_GlnE_GlnD_like"/>
    <property type="match status" value="1"/>
</dbReference>
<dbReference type="Gene3D" id="3.30.70.260">
    <property type="match status" value="1"/>
</dbReference>
<dbReference type="Gene3D" id="3.30.460.10">
    <property type="entry name" value="Beta Polymerase, domain 2"/>
    <property type="match status" value="1"/>
</dbReference>
<dbReference type="Gene3D" id="1.10.3090.10">
    <property type="entry name" value="cca-adding enzyme, domain 2"/>
    <property type="match status" value="1"/>
</dbReference>
<dbReference type="HAMAP" id="MF_00277">
    <property type="entry name" value="PII_uridylyl_transf"/>
    <property type="match status" value="1"/>
</dbReference>
<dbReference type="InterPro" id="IPR045865">
    <property type="entry name" value="ACT-like_dom_sf"/>
</dbReference>
<dbReference type="InterPro" id="IPR002912">
    <property type="entry name" value="ACT_dom"/>
</dbReference>
<dbReference type="InterPro" id="IPR003607">
    <property type="entry name" value="HD/PDEase_dom"/>
</dbReference>
<dbReference type="InterPro" id="IPR006674">
    <property type="entry name" value="HD_domain"/>
</dbReference>
<dbReference type="InterPro" id="IPR043519">
    <property type="entry name" value="NT_sf"/>
</dbReference>
<dbReference type="InterPro" id="IPR013546">
    <property type="entry name" value="PII_UdlTrfase/GS_AdlTrfase"/>
</dbReference>
<dbReference type="InterPro" id="IPR010043">
    <property type="entry name" value="UTase/UR"/>
</dbReference>
<dbReference type="NCBIfam" id="NF003467">
    <property type="entry name" value="PRK05092.1"/>
    <property type="match status" value="1"/>
</dbReference>
<dbReference type="NCBIfam" id="TIGR01693">
    <property type="entry name" value="UTase_glnD"/>
    <property type="match status" value="1"/>
</dbReference>
<dbReference type="PANTHER" id="PTHR47320">
    <property type="entry name" value="BIFUNCTIONAL URIDYLYLTRANSFERASE/URIDYLYL-REMOVING ENZYME"/>
    <property type="match status" value="1"/>
</dbReference>
<dbReference type="PANTHER" id="PTHR47320:SF1">
    <property type="entry name" value="BIFUNCTIONAL URIDYLYLTRANSFERASE_URIDYLYL-REMOVING ENZYME"/>
    <property type="match status" value="1"/>
</dbReference>
<dbReference type="Pfam" id="PF01842">
    <property type="entry name" value="ACT"/>
    <property type="match status" value="2"/>
</dbReference>
<dbReference type="Pfam" id="PF08335">
    <property type="entry name" value="GlnD_UR_UTase"/>
    <property type="match status" value="1"/>
</dbReference>
<dbReference type="Pfam" id="PF01966">
    <property type="entry name" value="HD"/>
    <property type="match status" value="1"/>
</dbReference>
<dbReference type="PIRSF" id="PIRSF006288">
    <property type="entry name" value="PII_uridyltransf"/>
    <property type="match status" value="1"/>
</dbReference>
<dbReference type="SMART" id="SM00471">
    <property type="entry name" value="HDc"/>
    <property type="match status" value="1"/>
</dbReference>
<dbReference type="SUPFAM" id="SSF55021">
    <property type="entry name" value="ACT-like"/>
    <property type="match status" value="2"/>
</dbReference>
<dbReference type="SUPFAM" id="SSF81301">
    <property type="entry name" value="Nucleotidyltransferase"/>
    <property type="match status" value="1"/>
</dbReference>
<dbReference type="SUPFAM" id="SSF81593">
    <property type="entry name" value="Nucleotidyltransferase substrate binding subunit/domain"/>
    <property type="match status" value="1"/>
</dbReference>
<dbReference type="SUPFAM" id="SSF81891">
    <property type="entry name" value="Poly A polymerase C-terminal region-like"/>
    <property type="match status" value="1"/>
</dbReference>
<dbReference type="PROSITE" id="PS51671">
    <property type="entry name" value="ACT"/>
    <property type="match status" value="2"/>
</dbReference>
<dbReference type="PROSITE" id="PS51831">
    <property type="entry name" value="HD"/>
    <property type="match status" value="1"/>
</dbReference>